<sequence>MAREPREGRGRERERDRDGDELIDKLVTINRVAKVVKGGRRFAFAALVVVGDQKGRVGFGAGKAKEVPEAIRKATERAKRGMIRVPMKEGRTLHHDIEGRFGAGHVVLRAAPPGTGIIAGGPMRAVFETLGIGDVVAKSLGSRNPHNMVKATVAALSQCASPRSVASRRGKKVADLFGPKREKEAPADV</sequence>
<protein>
    <recommendedName>
        <fullName evidence="1">Small ribosomal subunit protein uS5</fullName>
    </recommendedName>
    <alternativeName>
        <fullName evidence="3">30S ribosomal protein S5</fullName>
    </alternativeName>
</protein>
<name>RS5_ACICJ</name>
<comment type="function">
    <text evidence="1">With S4 and S12 plays an important role in translational accuracy.</text>
</comment>
<comment type="function">
    <text evidence="1">Located at the back of the 30S subunit body where it stabilizes the conformation of the head with respect to the body.</text>
</comment>
<comment type="subunit">
    <text evidence="1">Part of the 30S ribosomal subunit. Contacts proteins S4 and S8.</text>
</comment>
<comment type="domain">
    <text>The N-terminal domain interacts with the head of the 30S subunit; the C-terminal domain interacts with the body and contacts protein S4. The interaction surface between S4 and S5 is involved in control of translational fidelity.</text>
</comment>
<comment type="similarity">
    <text evidence="1">Belongs to the universal ribosomal protein uS5 family.</text>
</comment>
<proteinExistence type="inferred from homology"/>
<dbReference type="EMBL" id="CP000697">
    <property type="protein sequence ID" value="ABQ31130.1"/>
    <property type="molecule type" value="Genomic_DNA"/>
</dbReference>
<dbReference type="RefSeq" id="WP_007424190.1">
    <property type="nucleotide sequence ID" value="NC_009484.1"/>
</dbReference>
<dbReference type="SMR" id="A5FZU8"/>
<dbReference type="STRING" id="349163.Acry_1929"/>
<dbReference type="KEGG" id="acr:Acry_1929"/>
<dbReference type="eggNOG" id="COG0098">
    <property type="taxonomic scope" value="Bacteria"/>
</dbReference>
<dbReference type="HOGENOM" id="CLU_065898_2_2_5"/>
<dbReference type="Proteomes" id="UP000000245">
    <property type="component" value="Chromosome"/>
</dbReference>
<dbReference type="GO" id="GO:0015935">
    <property type="term" value="C:small ribosomal subunit"/>
    <property type="evidence" value="ECO:0007669"/>
    <property type="project" value="InterPro"/>
</dbReference>
<dbReference type="GO" id="GO:0019843">
    <property type="term" value="F:rRNA binding"/>
    <property type="evidence" value="ECO:0007669"/>
    <property type="project" value="UniProtKB-UniRule"/>
</dbReference>
<dbReference type="GO" id="GO:0003735">
    <property type="term" value="F:structural constituent of ribosome"/>
    <property type="evidence" value="ECO:0007669"/>
    <property type="project" value="InterPro"/>
</dbReference>
<dbReference type="GO" id="GO:0006412">
    <property type="term" value="P:translation"/>
    <property type="evidence" value="ECO:0007669"/>
    <property type="project" value="UniProtKB-UniRule"/>
</dbReference>
<dbReference type="FunFam" id="3.30.160.20:FF:000001">
    <property type="entry name" value="30S ribosomal protein S5"/>
    <property type="match status" value="1"/>
</dbReference>
<dbReference type="FunFam" id="3.30.230.10:FF:000002">
    <property type="entry name" value="30S ribosomal protein S5"/>
    <property type="match status" value="1"/>
</dbReference>
<dbReference type="Gene3D" id="3.30.160.20">
    <property type="match status" value="1"/>
</dbReference>
<dbReference type="Gene3D" id="3.30.230.10">
    <property type="match status" value="1"/>
</dbReference>
<dbReference type="HAMAP" id="MF_01307_B">
    <property type="entry name" value="Ribosomal_uS5_B"/>
    <property type="match status" value="1"/>
</dbReference>
<dbReference type="InterPro" id="IPR020568">
    <property type="entry name" value="Ribosomal_Su5_D2-typ_SF"/>
</dbReference>
<dbReference type="InterPro" id="IPR000851">
    <property type="entry name" value="Ribosomal_uS5"/>
</dbReference>
<dbReference type="InterPro" id="IPR005712">
    <property type="entry name" value="Ribosomal_uS5_bac-type"/>
</dbReference>
<dbReference type="InterPro" id="IPR005324">
    <property type="entry name" value="Ribosomal_uS5_C"/>
</dbReference>
<dbReference type="InterPro" id="IPR013810">
    <property type="entry name" value="Ribosomal_uS5_N"/>
</dbReference>
<dbReference type="InterPro" id="IPR018192">
    <property type="entry name" value="Ribosomal_uS5_N_CS"/>
</dbReference>
<dbReference type="InterPro" id="IPR014721">
    <property type="entry name" value="Ribsml_uS5_D2-typ_fold_subgr"/>
</dbReference>
<dbReference type="NCBIfam" id="TIGR01021">
    <property type="entry name" value="rpsE_bact"/>
    <property type="match status" value="1"/>
</dbReference>
<dbReference type="PANTHER" id="PTHR48277">
    <property type="entry name" value="MITOCHONDRIAL RIBOSOMAL PROTEIN S5"/>
    <property type="match status" value="1"/>
</dbReference>
<dbReference type="PANTHER" id="PTHR48277:SF1">
    <property type="entry name" value="MITOCHONDRIAL RIBOSOMAL PROTEIN S5"/>
    <property type="match status" value="1"/>
</dbReference>
<dbReference type="Pfam" id="PF00333">
    <property type="entry name" value="Ribosomal_S5"/>
    <property type="match status" value="1"/>
</dbReference>
<dbReference type="Pfam" id="PF03719">
    <property type="entry name" value="Ribosomal_S5_C"/>
    <property type="match status" value="1"/>
</dbReference>
<dbReference type="SUPFAM" id="SSF54768">
    <property type="entry name" value="dsRNA-binding domain-like"/>
    <property type="match status" value="1"/>
</dbReference>
<dbReference type="SUPFAM" id="SSF54211">
    <property type="entry name" value="Ribosomal protein S5 domain 2-like"/>
    <property type="match status" value="1"/>
</dbReference>
<dbReference type="PROSITE" id="PS00585">
    <property type="entry name" value="RIBOSOMAL_S5"/>
    <property type="match status" value="1"/>
</dbReference>
<dbReference type="PROSITE" id="PS50881">
    <property type="entry name" value="S5_DSRBD"/>
    <property type="match status" value="1"/>
</dbReference>
<gene>
    <name evidence="1" type="primary">rpsE</name>
    <name type="ordered locus">Acry_1929</name>
</gene>
<reference key="1">
    <citation type="submission" date="2007-05" db="EMBL/GenBank/DDBJ databases">
        <title>Complete sequence of chromosome of Acidiphilium cryptum JF-5.</title>
        <authorList>
            <consortium name="US DOE Joint Genome Institute"/>
            <person name="Copeland A."/>
            <person name="Lucas S."/>
            <person name="Lapidus A."/>
            <person name="Barry K."/>
            <person name="Detter J.C."/>
            <person name="Glavina del Rio T."/>
            <person name="Hammon N."/>
            <person name="Israni S."/>
            <person name="Dalin E."/>
            <person name="Tice H."/>
            <person name="Pitluck S."/>
            <person name="Sims D."/>
            <person name="Brettin T."/>
            <person name="Bruce D."/>
            <person name="Han C."/>
            <person name="Schmutz J."/>
            <person name="Larimer F."/>
            <person name="Land M."/>
            <person name="Hauser L."/>
            <person name="Kyrpides N."/>
            <person name="Kim E."/>
            <person name="Magnuson T."/>
            <person name="Richardson P."/>
        </authorList>
    </citation>
    <scope>NUCLEOTIDE SEQUENCE [LARGE SCALE GENOMIC DNA]</scope>
    <source>
        <strain>JF-5</strain>
    </source>
</reference>
<feature type="chain" id="PRO_0000323049" description="Small ribosomal subunit protein uS5">
    <location>
        <begin position="1"/>
        <end position="189"/>
    </location>
</feature>
<feature type="domain" description="S5 DRBM" evidence="1">
    <location>
        <begin position="22"/>
        <end position="85"/>
    </location>
</feature>
<feature type="region of interest" description="Disordered" evidence="2">
    <location>
        <begin position="164"/>
        <end position="189"/>
    </location>
</feature>
<feature type="compositionally biased region" description="Basic and acidic residues" evidence="2">
    <location>
        <begin position="172"/>
        <end position="189"/>
    </location>
</feature>
<keyword id="KW-1185">Reference proteome</keyword>
<keyword id="KW-0687">Ribonucleoprotein</keyword>
<keyword id="KW-0689">Ribosomal protein</keyword>
<keyword id="KW-0694">RNA-binding</keyword>
<keyword id="KW-0699">rRNA-binding</keyword>
<accession>A5FZU8</accession>
<evidence type="ECO:0000255" key="1">
    <source>
        <dbReference type="HAMAP-Rule" id="MF_01307"/>
    </source>
</evidence>
<evidence type="ECO:0000256" key="2">
    <source>
        <dbReference type="SAM" id="MobiDB-lite"/>
    </source>
</evidence>
<evidence type="ECO:0000305" key="3"/>
<organism>
    <name type="scientific">Acidiphilium cryptum (strain JF-5)</name>
    <dbReference type="NCBI Taxonomy" id="349163"/>
    <lineage>
        <taxon>Bacteria</taxon>
        <taxon>Pseudomonadati</taxon>
        <taxon>Pseudomonadota</taxon>
        <taxon>Alphaproteobacteria</taxon>
        <taxon>Acetobacterales</taxon>
        <taxon>Acidocellaceae</taxon>
        <taxon>Acidiphilium</taxon>
    </lineage>
</organism>